<name>HISZ_BACHK</name>
<evidence type="ECO:0000255" key="1">
    <source>
        <dbReference type="HAMAP-Rule" id="MF_00125"/>
    </source>
</evidence>
<accession>Q6HLE9</accession>
<organism>
    <name type="scientific">Bacillus thuringiensis subsp. konkukian (strain 97-27)</name>
    <dbReference type="NCBI Taxonomy" id="281309"/>
    <lineage>
        <taxon>Bacteria</taxon>
        <taxon>Bacillati</taxon>
        <taxon>Bacillota</taxon>
        <taxon>Bacilli</taxon>
        <taxon>Bacillales</taxon>
        <taxon>Bacillaceae</taxon>
        <taxon>Bacillus</taxon>
        <taxon>Bacillus cereus group</taxon>
    </lineage>
</organism>
<keyword id="KW-0028">Amino-acid biosynthesis</keyword>
<keyword id="KW-0963">Cytoplasm</keyword>
<keyword id="KW-0368">Histidine biosynthesis</keyword>
<dbReference type="EMBL" id="AE017355">
    <property type="protein sequence ID" value="AAT63900.1"/>
    <property type="molecule type" value="Genomic_DNA"/>
</dbReference>
<dbReference type="RefSeq" id="WP_000170323.1">
    <property type="nucleotide sequence ID" value="NC_005957.1"/>
</dbReference>
<dbReference type="RefSeq" id="YP_035622.1">
    <property type="nucleotide sequence ID" value="NC_005957.1"/>
</dbReference>
<dbReference type="SMR" id="Q6HLE9"/>
<dbReference type="KEGG" id="btk:BT9727_1288"/>
<dbReference type="PATRIC" id="fig|281309.8.peg.1357"/>
<dbReference type="HOGENOM" id="CLU_025113_0_0_9"/>
<dbReference type="UniPathway" id="UPA00031">
    <property type="reaction ID" value="UER00006"/>
</dbReference>
<dbReference type="Proteomes" id="UP000001301">
    <property type="component" value="Chromosome"/>
</dbReference>
<dbReference type="GO" id="GO:0005737">
    <property type="term" value="C:cytoplasm"/>
    <property type="evidence" value="ECO:0007669"/>
    <property type="project" value="UniProtKB-SubCell"/>
</dbReference>
<dbReference type="GO" id="GO:0140096">
    <property type="term" value="F:catalytic activity, acting on a protein"/>
    <property type="evidence" value="ECO:0007669"/>
    <property type="project" value="UniProtKB-ARBA"/>
</dbReference>
<dbReference type="GO" id="GO:0004821">
    <property type="term" value="F:histidine-tRNA ligase activity"/>
    <property type="evidence" value="ECO:0007669"/>
    <property type="project" value="TreeGrafter"/>
</dbReference>
<dbReference type="GO" id="GO:0016740">
    <property type="term" value="F:transferase activity"/>
    <property type="evidence" value="ECO:0007669"/>
    <property type="project" value="UniProtKB-ARBA"/>
</dbReference>
<dbReference type="GO" id="GO:0006427">
    <property type="term" value="P:histidyl-tRNA aminoacylation"/>
    <property type="evidence" value="ECO:0007669"/>
    <property type="project" value="TreeGrafter"/>
</dbReference>
<dbReference type="GO" id="GO:0000105">
    <property type="term" value="P:L-histidine biosynthetic process"/>
    <property type="evidence" value="ECO:0007669"/>
    <property type="project" value="UniProtKB-UniRule"/>
</dbReference>
<dbReference type="CDD" id="cd00773">
    <property type="entry name" value="HisRS-like_core"/>
    <property type="match status" value="1"/>
</dbReference>
<dbReference type="FunFam" id="3.30.930.10:FF:000060">
    <property type="entry name" value="ATP phosphoribosyltransferase regulatory subunit"/>
    <property type="match status" value="1"/>
</dbReference>
<dbReference type="Gene3D" id="3.30.930.10">
    <property type="entry name" value="Bira Bifunctional Protein, Domain 2"/>
    <property type="match status" value="1"/>
</dbReference>
<dbReference type="HAMAP" id="MF_00125">
    <property type="entry name" value="HisZ"/>
    <property type="match status" value="1"/>
</dbReference>
<dbReference type="InterPro" id="IPR006195">
    <property type="entry name" value="aa-tRNA-synth_II"/>
</dbReference>
<dbReference type="InterPro" id="IPR045864">
    <property type="entry name" value="aa-tRNA-synth_II/BPL/LPL"/>
</dbReference>
<dbReference type="InterPro" id="IPR041715">
    <property type="entry name" value="HisRS-like_core"/>
</dbReference>
<dbReference type="InterPro" id="IPR004516">
    <property type="entry name" value="HisRS/HisZ"/>
</dbReference>
<dbReference type="InterPro" id="IPR004517">
    <property type="entry name" value="HisZ"/>
</dbReference>
<dbReference type="NCBIfam" id="TIGR00443">
    <property type="entry name" value="hisZ_biosyn_reg"/>
    <property type="match status" value="1"/>
</dbReference>
<dbReference type="NCBIfam" id="NF008938">
    <property type="entry name" value="PRK12292.1-6"/>
    <property type="match status" value="1"/>
</dbReference>
<dbReference type="PANTHER" id="PTHR43707:SF6">
    <property type="entry name" value="ATP PHOSPHORIBOSYLTRANSFERASE REGULATORY SUBUNIT"/>
    <property type="match status" value="1"/>
</dbReference>
<dbReference type="PANTHER" id="PTHR43707">
    <property type="entry name" value="HISTIDYL-TRNA SYNTHETASE"/>
    <property type="match status" value="1"/>
</dbReference>
<dbReference type="Pfam" id="PF13393">
    <property type="entry name" value="tRNA-synt_His"/>
    <property type="match status" value="1"/>
</dbReference>
<dbReference type="PIRSF" id="PIRSF001549">
    <property type="entry name" value="His-tRNA_synth"/>
    <property type="match status" value="1"/>
</dbReference>
<dbReference type="SUPFAM" id="SSF55681">
    <property type="entry name" value="Class II aaRS and biotin synthetases"/>
    <property type="match status" value="1"/>
</dbReference>
<dbReference type="PROSITE" id="PS50862">
    <property type="entry name" value="AA_TRNA_LIGASE_II"/>
    <property type="match status" value="1"/>
</dbReference>
<reference key="1">
    <citation type="journal article" date="2006" name="J. Bacteriol.">
        <title>Pathogenomic sequence analysis of Bacillus cereus and Bacillus thuringiensis isolates closely related to Bacillus anthracis.</title>
        <authorList>
            <person name="Han C.S."/>
            <person name="Xie G."/>
            <person name="Challacombe J.F."/>
            <person name="Altherr M.R."/>
            <person name="Bhotika S.S."/>
            <person name="Bruce D."/>
            <person name="Campbell C.S."/>
            <person name="Campbell M.L."/>
            <person name="Chen J."/>
            <person name="Chertkov O."/>
            <person name="Cleland C."/>
            <person name="Dimitrijevic M."/>
            <person name="Doggett N.A."/>
            <person name="Fawcett J.J."/>
            <person name="Glavina T."/>
            <person name="Goodwin L.A."/>
            <person name="Hill K.K."/>
            <person name="Hitchcock P."/>
            <person name="Jackson P.J."/>
            <person name="Keim P."/>
            <person name="Kewalramani A.R."/>
            <person name="Longmire J."/>
            <person name="Lucas S."/>
            <person name="Malfatti S."/>
            <person name="McMurry K."/>
            <person name="Meincke L.J."/>
            <person name="Misra M."/>
            <person name="Moseman B.L."/>
            <person name="Mundt M."/>
            <person name="Munk A.C."/>
            <person name="Okinaka R.T."/>
            <person name="Parson-Quintana B."/>
            <person name="Reilly L.P."/>
            <person name="Richardson P."/>
            <person name="Robinson D.L."/>
            <person name="Rubin E."/>
            <person name="Saunders E."/>
            <person name="Tapia R."/>
            <person name="Tesmer J.G."/>
            <person name="Thayer N."/>
            <person name="Thompson L.S."/>
            <person name="Tice H."/>
            <person name="Ticknor L.O."/>
            <person name="Wills P.L."/>
            <person name="Brettin T.S."/>
            <person name="Gilna P."/>
        </authorList>
    </citation>
    <scope>NUCLEOTIDE SEQUENCE [LARGE SCALE GENOMIC DNA]</scope>
    <source>
        <strain>97-27</strain>
    </source>
</reference>
<gene>
    <name evidence="1" type="primary">hisZ</name>
    <name type="ordered locus">BT9727_1288</name>
</gene>
<comment type="function">
    <text evidence="1">Required for the first step of histidine biosynthesis. May allow the feedback regulation of ATP phosphoribosyltransferase activity by histidine.</text>
</comment>
<comment type="pathway">
    <text evidence="1">Amino-acid biosynthesis; L-histidine biosynthesis; L-histidine from 5-phospho-alpha-D-ribose 1-diphosphate: step 1/9.</text>
</comment>
<comment type="subunit">
    <text evidence="1">Heteromultimer composed of HisG and HisZ subunits.</text>
</comment>
<comment type="subcellular location">
    <subcellularLocation>
        <location evidence="1">Cytoplasm</location>
    </subcellularLocation>
</comment>
<comment type="miscellaneous">
    <text>This function is generally fulfilled by the C-terminal part of HisG, which is missing in some bacteria such as this one.</text>
</comment>
<comment type="similarity">
    <text evidence="1">Belongs to the class-II aminoacyl-tRNA synthetase family. HisZ subfamily.</text>
</comment>
<feature type="chain" id="PRO_0000242822" description="ATP phosphoribosyltransferase regulatory subunit">
    <location>
        <begin position="1"/>
        <end position="420"/>
    </location>
</feature>
<proteinExistence type="inferred from homology"/>
<protein>
    <recommendedName>
        <fullName evidence="1">ATP phosphoribosyltransferase regulatory subunit</fullName>
    </recommendedName>
</protein>
<sequence>MTKWKRANPNGTRDYLFEECTLIEEVEQKLRRTFLERGYEEIRTPTIEFYDVFAFQSRPIDEEKMYKFFDEKGRIIVLRPDMTIPLARVVGTQRCDTPLKVTYSGNVFRANESLAGKYNEIVQSGIEVIGIDNVRAEIECVISVIQSLQKLKVQSFTIEIGQVQLYKCIVKKLSIHEEEEKVLRTYIESKNYAALSNFIRDKKLDRCDETVKLLEKLPRLFGNLEVIEEAEKLASSNEMKMAITRVKEIYEAIEKLGYGSYISIDLGMIQHLDYYTGVIFKGYIYEIGEEIVSGGRYDELIGNFGEMLPAVGLAVQVNQIVKALQEQQEPYERKRIDIMIHYELNRLAEAERLRNLLQKDGKKVALSLFSNLNDTFQFARKNQIVTVVEAKSESLVEYVWKEKWVVQKEGETSCVTFKLR</sequence>